<proteinExistence type="inferred from homology"/>
<accession>B0R642</accession>
<protein>
    <recommendedName>
        <fullName evidence="1">Orotidine 5'-phosphate decarboxylase</fullName>
        <ecNumber evidence="1">4.1.1.23</ecNumber>
    </recommendedName>
    <alternativeName>
        <fullName evidence="1">OMP decarboxylase</fullName>
        <shortName evidence="1">OMPDCase</shortName>
        <shortName evidence="1">OMPdecase</shortName>
    </alternativeName>
</protein>
<comment type="catalytic activity">
    <reaction evidence="1">
        <text>orotidine 5'-phosphate + H(+) = UMP + CO2</text>
        <dbReference type="Rhea" id="RHEA:11596"/>
        <dbReference type="ChEBI" id="CHEBI:15378"/>
        <dbReference type="ChEBI" id="CHEBI:16526"/>
        <dbReference type="ChEBI" id="CHEBI:57538"/>
        <dbReference type="ChEBI" id="CHEBI:57865"/>
        <dbReference type="EC" id="4.1.1.23"/>
    </reaction>
</comment>
<comment type="pathway">
    <text evidence="1">Pyrimidine metabolism; UMP biosynthesis via de novo pathway; UMP from orotate: step 2/2.</text>
</comment>
<comment type="similarity">
    <text evidence="1">Belongs to the OMP decarboxylase family. Type 2 subfamily.</text>
</comment>
<sequence>MSFVEELGARIEAADSVVSVGLDPDMERLPEDVQDAELPRWAFNRRIIDATHEHAAVFKPNAAFYEDSDGWRALRETVAYAHGKGVPVLLDAKRADIGNTARQYAEILAHVDAITVNPYLGEDALQPFLTQDEAGVFVLCRTSNEGGMDFQHLELAAYDRRLYEHVAERAAEWNAQYGDVGLVVGATAPDELQAIRERVPELPFLVPGVGAQGGDAEAAVEYGLNDDGVGLVNSTRGVIFAGEHGSAWAAAAGDAARTLRERLNRHR</sequence>
<reference key="1">
    <citation type="journal article" date="2008" name="Genomics">
        <title>Evolution in the laboratory: the genome of Halobacterium salinarum strain R1 compared to that of strain NRC-1.</title>
        <authorList>
            <person name="Pfeiffer F."/>
            <person name="Schuster S.C."/>
            <person name="Broicher A."/>
            <person name="Falb M."/>
            <person name="Palm P."/>
            <person name="Rodewald K."/>
            <person name="Ruepp A."/>
            <person name="Soppa J."/>
            <person name="Tittor J."/>
            <person name="Oesterhelt D."/>
        </authorList>
    </citation>
    <scope>NUCLEOTIDE SEQUENCE [LARGE SCALE GENOMIC DNA]</scope>
    <source>
        <strain>ATCC 29341 / DSM 671 / R1</strain>
    </source>
</reference>
<feature type="chain" id="PRO_1000138953" description="Orotidine 5'-phosphate decarboxylase">
    <location>
        <begin position="1"/>
        <end position="267"/>
    </location>
</feature>
<feature type="active site" description="Proton donor" evidence="1">
    <location>
        <position position="93"/>
    </location>
</feature>
<dbReference type="EC" id="4.1.1.23" evidence="1"/>
<dbReference type="EMBL" id="AM774415">
    <property type="protein sequence ID" value="CAP14211.1"/>
    <property type="molecule type" value="Genomic_DNA"/>
</dbReference>
<dbReference type="RefSeq" id="WP_010903220.1">
    <property type="nucleotide sequence ID" value="NC_010364.1"/>
</dbReference>
<dbReference type="SMR" id="B0R642"/>
<dbReference type="EnsemblBacteria" id="CAP14211">
    <property type="protein sequence ID" value="CAP14211"/>
    <property type="gene ID" value="OE_3363F"/>
</dbReference>
<dbReference type="GeneID" id="68694336"/>
<dbReference type="KEGG" id="hsl:OE_3363F"/>
<dbReference type="HOGENOM" id="CLU_060704_1_0_2"/>
<dbReference type="PhylomeDB" id="B0R642"/>
<dbReference type="UniPathway" id="UPA00070">
    <property type="reaction ID" value="UER00120"/>
</dbReference>
<dbReference type="Proteomes" id="UP000001321">
    <property type="component" value="Chromosome"/>
</dbReference>
<dbReference type="GO" id="GO:0004590">
    <property type="term" value="F:orotidine-5'-phosphate decarboxylase activity"/>
    <property type="evidence" value="ECO:0007669"/>
    <property type="project" value="UniProtKB-UniRule"/>
</dbReference>
<dbReference type="GO" id="GO:0006207">
    <property type="term" value="P:'de novo' pyrimidine nucleobase biosynthetic process"/>
    <property type="evidence" value="ECO:0007669"/>
    <property type="project" value="InterPro"/>
</dbReference>
<dbReference type="GO" id="GO:0044205">
    <property type="term" value="P:'de novo' UMP biosynthetic process"/>
    <property type="evidence" value="ECO:0007669"/>
    <property type="project" value="UniProtKB-UniRule"/>
</dbReference>
<dbReference type="CDD" id="cd04725">
    <property type="entry name" value="OMP_decarboxylase_like"/>
    <property type="match status" value="1"/>
</dbReference>
<dbReference type="FunFam" id="3.20.20.70:FF:000246">
    <property type="entry name" value="Orotidine 5'-phosphate decarboxylase"/>
    <property type="match status" value="1"/>
</dbReference>
<dbReference type="Gene3D" id="3.20.20.70">
    <property type="entry name" value="Aldolase class I"/>
    <property type="match status" value="1"/>
</dbReference>
<dbReference type="HAMAP" id="MF_01215">
    <property type="entry name" value="OMPdecase_type2"/>
    <property type="match status" value="1"/>
</dbReference>
<dbReference type="InterPro" id="IPR013785">
    <property type="entry name" value="Aldolase_TIM"/>
</dbReference>
<dbReference type="InterPro" id="IPR018089">
    <property type="entry name" value="OMPdecase_AS"/>
</dbReference>
<dbReference type="InterPro" id="IPR011995">
    <property type="entry name" value="OMPdecase_type-2"/>
</dbReference>
<dbReference type="InterPro" id="IPR001754">
    <property type="entry name" value="OMPdeCOase_dom"/>
</dbReference>
<dbReference type="InterPro" id="IPR011060">
    <property type="entry name" value="RibuloseP-bd_barrel"/>
</dbReference>
<dbReference type="NCBIfam" id="TIGR02127">
    <property type="entry name" value="pyrF_sub2"/>
    <property type="match status" value="1"/>
</dbReference>
<dbReference type="PANTHER" id="PTHR43375">
    <property type="entry name" value="OROTIDINE 5'-PHOSPHATE DECARBOXYLASE"/>
    <property type="match status" value="1"/>
</dbReference>
<dbReference type="PANTHER" id="PTHR43375:SF1">
    <property type="entry name" value="OROTIDINE 5'-PHOSPHATE DECARBOXYLASE"/>
    <property type="match status" value="1"/>
</dbReference>
<dbReference type="Pfam" id="PF00215">
    <property type="entry name" value="OMPdecase"/>
    <property type="match status" value="1"/>
</dbReference>
<dbReference type="SMART" id="SM00934">
    <property type="entry name" value="OMPdecase"/>
    <property type="match status" value="1"/>
</dbReference>
<dbReference type="SUPFAM" id="SSF51366">
    <property type="entry name" value="Ribulose-phoshate binding barrel"/>
    <property type="match status" value="1"/>
</dbReference>
<dbReference type="PROSITE" id="PS00156">
    <property type="entry name" value="OMPDECASE"/>
    <property type="match status" value="1"/>
</dbReference>
<keyword id="KW-0210">Decarboxylase</keyword>
<keyword id="KW-0456">Lyase</keyword>
<keyword id="KW-0665">Pyrimidine biosynthesis</keyword>
<name>PYRF_HALS3</name>
<gene>
    <name evidence="1" type="primary">pyrF</name>
    <name type="ordered locus">OE_3363F</name>
</gene>
<evidence type="ECO:0000255" key="1">
    <source>
        <dbReference type="HAMAP-Rule" id="MF_01215"/>
    </source>
</evidence>
<organism>
    <name type="scientific">Halobacterium salinarum (strain ATCC 29341 / DSM 671 / R1)</name>
    <dbReference type="NCBI Taxonomy" id="478009"/>
    <lineage>
        <taxon>Archaea</taxon>
        <taxon>Methanobacteriati</taxon>
        <taxon>Methanobacteriota</taxon>
        <taxon>Stenosarchaea group</taxon>
        <taxon>Halobacteria</taxon>
        <taxon>Halobacteriales</taxon>
        <taxon>Halobacteriaceae</taxon>
        <taxon>Halobacterium</taxon>
        <taxon>Halobacterium salinarum NRC-34001</taxon>
    </lineage>
</organism>